<sequence length="506" mass="56479">MSQSRARKVLIVGAGPVGALTALSLHRRGWEVEVWETRDDPRGQDAAPSNLRSINLAISSRGLEALRSVDPSIAENFLEEAIPMKGRMIHHTDGKQESQLYDPIGGQSINSISRPILNQRLVQSLPEAVKLRFNTKLKHIDFKNRVAYASHKQETSLLPGEESEKDKKQNTEDEDGTAFDLVIGCDGSWSKVRTAMMRAERIDFSQSFIPHAYIELHMPSDPASPGGYAMDKNHLHIWPRHAFMLIGLPNKDGSFTLTLFIPFSSLELLDTRESAAAFFREHFPSAVDIVGEKVLLDDFEKNPRGNLVTINCTPSAWSSHAILLGDASHSMVPFYGQGLNCGLEDVRVLSSILERHHISPTTTLALGETDPELELALKAYSDERQGDLKAICELALQNYTEMRSHVLSPLHHLRRQVDKVFTTLFRSAPQATLSLMEPFPTKKVRGWTSLYEMVTFRPDVGYSEALRKERWQKDVVGYAGWIGGVVGVGAAGVFAATMAKKWLERR</sequence>
<organism>
    <name type="scientific">Cryptococcus neoformans var. neoformans serotype D (strain B-3501A)</name>
    <name type="common">Filobasidiella neoformans</name>
    <dbReference type="NCBI Taxonomy" id="283643"/>
    <lineage>
        <taxon>Eukaryota</taxon>
        <taxon>Fungi</taxon>
        <taxon>Dikarya</taxon>
        <taxon>Basidiomycota</taxon>
        <taxon>Agaricomycotina</taxon>
        <taxon>Tremellomycetes</taxon>
        <taxon>Tremellales</taxon>
        <taxon>Cryptococcaceae</taxon>
        <taxon>Cryptococcus</taxon>
        <taxon>Cryptococcus neoformans species complex</taxon>
    </lineage>
</organism>
<feature type="chain" id="PRO_0000410129" description="Kynurenine 3-monooxygenase">
    <location>
        <begin position="1"/>
        <end position="506"/>
    </location>
</feature>
<feature type="region of interest" description="Disordered" evidence="2">
    <location>
        <begin position="153"/>
        <end position="175"/>
    </location>
</feature>
<feature type="compositionally biased region" description="Basic and acidic residues" evidence="2">
    <location>
        <begin position="162"/>
        <end position="171"/>
    </location>
</feature>
<gene>
    <name evidence="1" type="primary">BNA4</name>
    <name type="ordered locus">CNBC3070</name>
</gene>
<dbReference type="EC" id="1.14.13.9" evidence="1"/>
<dbReference type="EMBL" id="AAEY01000013">
    <property type="protein sequence ID" value="EAL22169.1"/>
    <property type="molecule type" value="Genomic_DNA"/>
</dbReference>
<dbReference type="RefSeq" id="XP_776816.1">
    <property type="nucleotide sequence ID" value="XM_771723.1"/>
</dbReference>
<dbReference type="SMR" id="P0CO49"/>
<dbReference type="GeneID" id="4934972"/>
<dbReference type="KEGG" id="cnb:CNBC3070"/>
<dbReference type="VEuPathDB" id="FungiDB:CNBC3070"/>
<dbReference type="HOGENOM" id="CLU_023210_0_1_1"/>
<dbReference type="OrthoDB" id="625at5206"/>
<dbReference type="UniPathway" id="UPA00253">
    <property type="reaction ID" value="UER00328"/>
</dbReference>
<dbReference type="GO" id="GO:0005741">
    <property type="term" value="C:mitochondrial outer membrane"/>
    <property type="evidence" value="ECO:0007669"/>
    <property type="project" value="UniProtKB-SubCell"/>
</dbReference>
<dbReference type="GO" id="GO:0005777">
    <property type="term" value="C:peroxisome"/>
    <property type="evidence" value="ECO:0007669"/>
    <property type="project" value="EnsemblFungi"/>
</dbReference>
<dbReference type="GO" id="GO:0071949">
    <property type="term" value="F:FAD binding"/>
    <property type="evidence" value="ECO:0007669"/>
    <property type="project" value="EnsemblFungi"/>
</dbReference>
<dbReference type="GO" id="GO:0004502">
    <property type="term" value="F:kynurenine 3-monooxygenase activity"/>
    <property type="evidence" value="ECO:0007669"/>
    <property type="project" value="UniProtKB-UniRule"/>
</dbReference>
<dbReference type="GO" id="GO:0016174">
    <property type="term" value="F:NAD(P)H oxidase H2O2-forming activity"/>
    <property type="evidence" value="ECO:0007669"/>
    <property type="project" value="EnsemblFungi"/>
</dbReference>
<dbReference type="GO" id="GO:0034354">
    <property type="term" value="P:'de novo' NAD biosynthetic process from L-tryptophan"/>
    <property type="evidence" value="ECO:0007669"/>
    <property type="project" value="UniProtKB-UniRule"/>
</dbReference>
<dbReference type="GO" id="GO:0043420">
    <property type="term" value="P:anthranilate metabolic process"/>
    <property type="evidence" value="ECO:0007669"/>
    <property type="project" value="UniProtKB-UniRule"/>
</dbReference>
<dbReference type="GO" id="GO:0070189">
    <property type="term" value="P:kynurenine metabolic process"/>
    <property type="evidence" value="ECO:0007669"/>
    <property type="project" value="EnsemblFungi"/>
</dbReference>
<dbReference type="GO" id="GO:0006569">
    <property type="term" value="P:L-tryptophan catabolic process"/>
    <property type="evidence" value="ECO:0007669"/>
    <property type="project" value="UniProtKB-UniRule"/>
</dbReference>
<dbReference type="GO" id="GO:0019805">
    <property type="term" value="P:quinolinate biosynthetic process"/>
    <property type="evidence" value="ECO:0007669"/>
    <property type="project" value="UniProtKB-UniRule"/>
</dbReference>
<dbReference type="FunFam" id="3.50.50.60:FF:000129">
    <property type="entry name" value="Kynurenine 3-monooxygenase"/>
    <property type="match status" value="1"/>
</dbReference>
<dbReference type="Gene3D" id="3.50.50.60">
    <property type="entry name" value="FAD/NAD(P)-binding domain"/>
    <property type="match status" value="1"/>
</dbReference>
<dbReference type="HAMAP" id="MF_01971">
    <property type="entry name" value="Kynurenine_monooxygenase"/>
    <property type="match status" value="1"/>
</dbReference>
<dbReference type="InterPro" id="IPR002938">
    <property type="entry name" value="FAD-bd"/>
</dbReference>
<dbReference type="InterPro" id="IPR036188">
    <property type="entry name" value="FAD/NAD-bd_sf"/>
</dbReference>
<dbReference type="InterPro" id="IPR027545">
    <property type="entry name" value="Kynurenine_monooxygenase"/>
</dbReference>
<dbReference type="PANTHER" id="PTHR46028">
    <property type="entry name" value="KYNURENINE 3-MONOOXYGENASE"/>
    <property type="match status" value="1"/>
</dbReference>
<dbReference type="PANTHER" id="PTHR46028:SF2">
    <property type="entry name" value="KYNURENINE 3-MONOOXYGENASE"/>
    <property type="match status" value="1"/>
</dbReference>
<dbReference type="Pfam" id="PF01494">
    <property type="entry name" value="FAD_binding_3"/>
    <property type="match status" value="1"/>
</dbReference>
<dbReference type="PRINTS" id="PR00420">
    <property type="entry name" value="RNGMNOXGNASE"/>
</dbReference>
<dbReference type="SUPFAM" id="SSF51905">
    <property type="entry name" value="FAD/NAD(P)-binding domain"/>
    <property type="match status" value="1"/>
</dbReference>
<proteinExistence type="inferred from homology"/>
<name>KMO_CRYNB</name>
<accession>P0CO49</accession>
<accession>Q55W30</accession>
<accession>Q5KK63</accession>
<keyword id="KW-0274">FAD</keyword>
<keyword id="KW-0285">Flavoprotein</keyword>
<keyword id="KW-0472">Membrane</keyword>
<keyword id="KW-0496">Mitochondrion</keyword>
<keyword id="KW-1000">Mitochondrion outer membrane</keyword>
<keyword id="KW-0503">Monooxygenase</keyword>
<keyword id="KW-0521">NADP</keyword>
<keyword id="KW-0560">Oxidoreductase</keyword>
<keyword id="KW-0662">Pyridine nucleotide biosynthesis</keyword>
<protein>
    <recommendedName>
        <fullName evidence="1">Kynurenine 3-monooxygenase</fullName>
        <ecNumber evidence="1">1.14.13.9</ecNumber>
    </recommendedName>
    <alternativeName>
        <fullName evidence="1">Biosynthesis of nicotinic acid protein 4</fullName>
    </alternativeName>
    <alternativeName>
        <fullName evidence="1">Kynurenine 3-hydroxylase</fullName>
    </alternativeName>
</protein>
<comment type="function">
    <text evidence="1">Catalyzes the hydroxylation of L-kynurenine (L-Kyn) to form 3-hydroxy-L-kynurenine (L-3OHKyn). Required for synthesis of quinolinic acid.</text>
</comment>
<comment type="catalytic activity">
    <reaction evidence="1">
        <text>L-kynurenine + NADPH + O2 + H(+) = 3-hydroxy-L-kynurenine + NADP(+) + H2O</text>
        <dbReference type="Rhea" id="RHEA:20545"/>
        <dbReference type="ChEBI" id="CHEBI:15377"/>
        <dbReference type="ChEBI" id="CHEBI:15378"/>
        <dbReference type="ChEBI" id="CHEBI:15379"/>
        <dbReference type="ChEBI" id="CHEBI:57783"/>
        <dbReference type="ChEBI" id="CHEBI:57959"/>
        <dbReference type="ChEBI" id="CHEBI:58125"/>
        <dbReference type="ChEBI" id="CHEBI:58349"/>
        <dbReference type="EC" id="1.14.13.9"/>
    </reaction>
</comment>
<comment type="cofactor">
    <cofactor evidence="1">
        <name>FAD</name>
        <dbReference type="ChEBI" id="CHEBI:57692"/>
    </cofactor>
</comment>
<comment type="pathway">
    <text evidence="1">Cofactor biosynthesis; NAD(+) biosynthesis; quinolinate from L-kynurenine: step 1/3.</text>
</comment>
<comment type="subcellular location">
    <subcellularLocation>
        <location evidence="1">Mitochondrion outer membrane</location>
    </subcellularLocation>
</comment>
<comment type="similarity">
    <text evidence="1">Belongs to the aromatic-ring hydroxylase family. KMO subfamily.</text>
</comment>
<evidence type="ECO:0000255" key="1">
    <source>
        <dbReference type="HAMAP-Rule" id="MF_03018"/>
    </source>
</evidence>
<evidence type="ECO:0000256" key="2">
    <source>
        <dbReference type="SAM" id="MobiDB-lite"/>
    </source>
</evidence>
<reference key="1">
    <citation type="journal article" date="2005" name="Science">
        <title>The genome of the basidiomycetous yeast and human pathogen Cryptococcus neoformans.</title>
        <authorList>
            <person name="Loftus B.J."/>
            <person name="Fung E."/>
            <person name="Roncaglia P."/>
            <person name="Rowley D."/>
            <person name="Amedeo P."/>
            <person name="Bruno D."/>
            <person name="Vamathevan J."/>
            <person name="Miranda M."/>
            <person name="Anderson I.J."/>
            <person name="Fraser J.A."/>
            <person name="Allen J.E."/>
            <person name="Bosdet I.E."/>
            <person name="Brent M.R."/>
            <person name="Chiu R."/>
            <person name="Doering T.L."/>
            <person name="Donlin M.J."/>
            <person name="D'Souza C.A."/>
            <person name="Fox D.S."/>
            <person name="Grinberg V."/>
            <person name="Fu J."/>
            <person name="Fukushima M."/>
            <person name="Haas B.J."/>
            <person name="Huang J.C."/>
            <person name="Janbon G."/>
            <person name="Jones S.J.M."/>
            <person name="Koo H.L."/>
            <person name="Krzywinski M.I."/>
            <person name="Kwon-Chung K.J."/>
            <person name="Lengeler K.B."/>
            <person name="Maiti R."/>
            <person name="Marra M.A."/>
            <person name="Marra R.E."/>
            <person name="Mathewson C.A."/>
            <person name="Mitchell T.G."/>
            <person name="Pertea M."/>
            <person name="Riggs F.R."/>
            <person name="Salzberg S.L."/>
            <person name="Schein J.E."/>
            <person name="Shvartsbeyn A."/>
            <person name="Shin H."/>
            <person name="Shumway M."/>
            <person name="Specht C.A."/>
            <person name="Suh B.B."/>
            <person name="Tenney A."/>
            <person name="Utterback T.R."/>
            <person name="Wickes B.L."/>
            <person name="Wortman J.R."/>
            <person name="Wye N.H."/>
            <person name="Kronstad J.W."/>
            <person name="Lodge J.K."/>
            <person name="Heitman J."/>
            <person name="Davis R.W."/>
            <person name="Fraser C.M."/>
            <person name="Hyman R.W."/>
        </authorList>
    </citation>
    <scope>NUCLEOTIDE SEQUENCE [LARGE SCALE GENOMIC DNA]</scope>
    <source>
        <strain>B-3501A</strain>
    </source>
</reference>